<sequence length="252" mass="27834">MSLLTEVETYVLSIVPSGPLKAEIAQRLEDVFAGKNTDLEALMEWLKTRPILSPLTKGILGFVFTLTVPSERGLQRRRFVQNALNGNGDPNNMDRAVKLYRKLKREITFHGAKEIALSYSAGALASCMGLIYNRMGAVTTEVAFGLVCATCEQIADSQHRSHRQMVTTTNPLIRHENRMVLASTTAKAMEQMAGSSEQAAEAMEVASQARQMVQAMRAIGTHPSSSAGLKDDLLENLQAYQKRMGVQMQRFK</sequence>
<protein>
    <recommendedName>
        <fullName evidence="1">Matrix protein 1</fullName>
        <shortName evidence="1">M1</shortName>
    </recommendedName>
</protein>
<gene>
    <name evidence="1" type="primary">M</name>
</gene>
<reference key="1">
    <citation type="journal article" date="2004" name="Virology">
        <title>Genetic analysis of human H2N2 and early H3N2 influenza viruses, 1957-1972: evidence for genetic divergence and multiple reassortment events.</title>
        <authorList>
            <person name="Lindstrom S.E."/>
            <person name="Cox N.J."/>
            <person name="Klimov A."/>
        </authorList>
    </citation>
    <scope>NUCLEOTIDE SEQUENCE [GENOMIC RNA]</scope>
</reference>
<organismHost>
    <name type="scientific">Aves</name>
    <dbReference type="NCBI Taxonomy" id="8782"/>
</organismHost>
<organismHost>
    <name type="scientific">Homo sapiens</name>
    <name type="common">Human</name>
    <dbReference type="NCBI Taxonomy" id="9606"/>
</organismHost>
<organismHost>
    <name type="scientific">Mysticeti</name>
    <name type="common">baleen whales</name>
    <dbReference type="NCBI Taxonomy" id="9761"/>
</organismHost>
<organismHost>
    <name type="scientific">Phocidae</name>
    <name type="common">true seals</name>
    <dbReference type="NCBI Taxonomy" id="9709"/>
</organismHost>
<organismHost>
    <name type="scientific">Sus scrofa</name>
    <name type="common">Pig</name>
    <dbReference type="NCBI Taxonomy" id="9823"/>
</organismHost>
<accession>Q6XT42</accession>
<name>M1_I69A0</name>
<keyword id="KW-0025">Alternative splicing</keyword>
<keyword id="KW-1048">Host nucleus</keyword>
<keyword id="KW-0472">Membrane</keyword>
<keyword id="KW-0694">RNA-binding</keyword>
<keyword id="KW-0468">Viral matrix protein</keyword>
<keyword id="KW-0946">Virion</keyword>
<organism>
    <name type="scientific">Influenza A virus (strain A/England/878/1969 H3N2)</name>
    <dbReference type="NCBI Taxonomy" id="387147"/>
    <lineage>
        <taxon>Viruses</taxon>
        <taxon>Riboviria</taxon>
        <taxon>Orthornavirae</taxon>
        <taxon>Negarnaviricota</taxon>
        <taxon>Polyploviricotina</taxon>
        <taxon>Insthoviricetes</taxon>
        <taxon>Articulavirales</taxon>
        <taxon>Orthomyxoviridae</taxon>
        <taxon>Alphainfluenzavirus</taxon>
        <taxon>Alphainfluenzavirus influenzae</taxon>
        <taxon>Influenza A virus</taxon>
    </lineage>
</organism>
<evidence type="ECO:0000255" key="1">
    <source>
        <dbReference type="HAMAP-Rule" id="MF_04068"/>
    </source>
</evidence>
<comment type="function">
    <text evidence="1">Plays critical roles in virus replication, from virus entry and uncoating to assembly and budding of the virus particle. M1 binding to ribonucleocapsids (RNPs) in nucleus seems to inhibit viral transcription. Interaction of viral NEP with M1-RNP is thought to promote nuclear export of the complex, which is targeted to the virion assembly site at the apical plasma membrane in polarized epithelial cells. Interactions with NA and HA may bring M1, a non-raft-associated protein, into lipid rafts. Forms a continuous shell on the inner side of the lipid bilayer in virion, where it binds the RNP. During virus entry into cell, the M2 ion channel acidifies the internal virion core, inducing M1 dissociation from the RNP. M1-free RNPs are transported to the nucleus, where viral transcription and replication can take place.</text>
</comment>
<comment type="function">
    <text evidence="1">Determines the virion's shape: spherical or filamentous. Clinical isolates of influenza are characterized by the presence of significant proportion of filamentous virions, whereas after multiple passage on eggs or cell culture, virions have only spherical morphology. Filamentous virions are thought to be important to infect neighboring cells, and spherical virions more suited to spread through aerosol between hosts organisms.</text>
</comment>
<comment type="subunit">
    <text evidence="1">Homodimer and homomultimer. Interacts with NEP. Binds ribonucleocapsid by both interacting with genomic RNA and NP protein. May interact with HA and NA. Cannot bind NP without genomic RNA.</text>
</comment>
<comment type="subcellular location">
    <subcellularLocation>
        <location evidence="1">Virion membrane</location>
        <topology evidence="1">Peripheral membrane protein</topology>
        <orientation evidence="1">Cytoplasmic side</orientation>
    </subcellularLocation>
    <subcellularLocation>
        <location evidence="1">Host nucleus</location>
    </subcellularLocation>
</comment>
<comment type="alternative products">
    <event type="alternative splicing"/>
    <isoform>
        <id>Q6XT42-1</id>
        <name>M1</name>
        <sequence type="displayed"/>
    </isoform>
    <isoform>
        <id>Q6XT43-1</id>
        <name>M2</name>
        <sequence type="external"/>
    </isoform>
    <text>Only the first 9 residues are shared by the 2 isoforms.</text>
</comment>
<comment type="miscellaneous">
    <text evidence="1">Most abundant protein in virion. When expressed alone can form virus-like particles in transfected cells.</text>
</comment>
<comment type="similarity">
    <text evidence="1">Belongs to the influenza viruses Matrix protein M1 family.</text>
</comment>
<feature type="chain" id="PRO_0000326290" description="Matrix protein 1">
    <location>
        <begin position="1"/>
        <end position="252"/>
    </location>
</feature>
<feature type="region of interest" description="Membrane-binding" evidence="1">
    <location>
        <begin position="1"/>
        <end position="164"/>
    </location>
</feature>
<feature type="region of interest" description="RNP-binding" evidence="1">
    <location>
        <begin position="165"/>
        <end position="252"/>
    </location>
</feature>
<feature type="short sequence motif" description="Nuclear localization signal" evidence="1">
    <location>
        <begin position="101"/>
        <end position="105"/>
    </location>
</feature>
<proteinExistence type="inferred from homology"/>
<dbReference type="EMBL" id="AY210254">
    <property type="protein sequence ID" value="AAO46681.1"/>
    <property type="molecule type" value="Genomic_RNA"/>
</dbReference>
<dbReference type="SMR" id="Q6XT42"/>
<dbReference type="GO" id="GO:0042025">
    <property type="term" value="C:host cell nucleus"/>
    <property type="evidence" value="ECO:0007669"/>
    <property type="project" value="UniProtKB-SubCell"/>
</dbReference>
<dbReference type="GO" id="GO:0016020">
    <property type="term" value="C:membrane"/>
    <property type="evidence" value="ECO:0007669"/>
    <property type="project" value="UniProtKB-KW"/>
</dbReference>
<dbReference type="GO" id="GO:0055036">
    <property type="term" value="C:virion membrane"/>
    <property type="evidence" value="ECO:0007669"/>
    <property type="project" value="UniProtKB-SubCell"/>
</dbReference>
<dbReference type="GO" id="GO:0003723">
    <property type="term" value="F:RNA binding"/>
    <property type="evidence" value="ECO:0007669"/>
    <property type="project" value="UniProtKB-UniRule"/>
</dbReference>
<dbReference type="GO" id="GO:0039660">
    <property type="term" value="F:structural constituent of virion"/>
    <property type="evidence" value="ECO:0007669"/>
    <property type="project" value="UniProtKB-UniRule"/>
</dbReference>
<dbReference type="GO" id="GO:0046761">
    <property type="term" value="P:viral budding from plasma membrane"/>
    <property type="evidence" value="ECO:0007669"/>
    <property type="project" value="UniProtKB-UniRule"/>
</dbReference>
<dbReference type="FunFam" id="1.10.10.180:FF:000001">
    <property type="entry name" value="Matrix protein 1"/>
    <property type="match status" value="1"/>
</dbReference>
<dbReference type="FunFam" id="1.20.91.10:FF:000001">
    <property type="entry name" value="Matrix protein 1"/>
    <property type="match status" value="1"/>
</dbReference>
<dbReference type="Gene3D" id="1.10.10.180">
    <property type="match status" value="1"/>
</dbReference>
<dbReference type="Gene3D" id="1.20.91.10">
    <property type="match status" value="1"/>
</dbReference>
<dbReference type="HAMAP" id="MF_04068">
    <property type="entry name" value="INFV_M1"/>
    <property type="match status" value="1"/>
</dbReference>
<dbReference type="InterPro" id="IPR036039">
    <property type="entry name" value="Flu_matrix_M1"/>
</dbReference>
<dbReference type="InterPro" id="IPR013188">
    <property type="entry name" value="Flu_matrix_M1_C"/>
</dbReference>
<dbReference type="InterPro" id="IPR001561">
    <property type="entry name" value="Flu_matrix_M1_N"/>
</dbReference>
<dbReference type="InterPro" id="IPR015423">
    <property type="entry name" value="Flu_matrix_M1_N_sub1"/>
</dbReference>
<dbReference type="InterPro" id="IPR015799">
    <property type="entry name" value="Flu_matrix_M1_N_sub2"/>
</dbReference>
<dbReference type="InterPro" id="IPR037533">
    <property type="entry name" value="INFV_M1"/>
</dbReference>
<dbReference type="Pfam" id="PF00598">
    <property type="entry name" value="Flu_M1"/>
    <property type="match status" value="1"/>
</dbReference>
<dbReference type="Pfam" id="PF08289">
    <property type="entry name" value="Flu_M1_C"/>
    <property type="match status" value="1"/>
</dbReference>
<dbReference type="SMART" id="SM00759">
    <property type="entry name" value="Flu_M1_C"/>
    <property type="match status" value="1"/>
</dbReference>
<dbReference type="SUPFAM" id="SSF48145">
    <property type="entry name" value="Influenza virus matrix protein M1"/>
    <property type="match status" value="1"/>
</dbReference>